<proteinExistence type="inferred from homology"/>
<gene>
    <name evidence="1" type="primary">trpA</name>
    <name type="ordered locus">BWG_1089</name>
</gene>
<name>TRPA_ECOBW</name>
<dbReference type="EC" id="4.2.1.20" evidence="1"/>
<dbReference type="EMBL" id="CP001396">
    <property type="protein sequence ID" value="ACR65718.1"/>
    <property type="molecule type" value="Genomic_DNA"/>
</dbReference>
<dbReference type="RefSeq" id="WP_000443067.1">
    <property type="nucleotide sequence ID" value="NC_012759.1"/>
</dbReference>
<dbReference type="SMR" id="C4ZTV3"/>
<dbReference type="GeneID" id="75171374"/>
<dbReference type="KEGG" id="ebw:BWG_1089"/>
<dbReference type="HOGENOM" id="CLU_016734_0_4_6"/>
<dbReference type="UniPathway" id="UPA00035">
    <property type="reaction ID" value="UER00044"/>
</dbReference>
<dbReference type="GO" id="GO:0005829">
    <property type="term" value="C:cytosol"/>
    <property type="evidence" value="ECO:0007669"/>
    <property type="project" value="TreeGrafter"/>
</dbReference>
<dbReference type="GO" id="GO:0004834">
    <property type="term" value="F:tryptophan synthase activity"/>
    <property type="evidence" value="ECO:0007669"/>
    <property type="project" value="UniProtKB-UniRule"/>
</dbReference>
<dbReference type="CDD" id="cd04724">
    <property type="entry name" value="Tryptophan_synthase_alpha"/>
    <property type="match status" value="1"/>
</dbReference>
<dbReference type="FunFam" id="3.20.20.70:FF:000037">
    <property type="entry name" value="Tryptophan synthase alpha chain"/>
    <property type="match status" value="1"/>
</dbReference>
<dbReference type="Gene3D" id="3.20.20.70">
    <property type="entry name" value="Aldolase class I"/>
    <property type="match status" value="1"/>
</dbReference>
<dbReference type="HAMAP" id="MF_00131">
    <property type="entry name" value="Trp_synth_alpha"/>
    <property type="match status" value="1"/>
</dbReference>
<dbReference type="InterPro" id="IPR013785">
    <property type="entry name" value="Aldolase_TIM"/>
</dbReference>
<dbReference type="InterPro" id="IPR011060">
    <property type="entry name" value="RibuloseP-bd_barrel"/>
</dbReference>
<dbReference type="InterPro" id="IPR018204">
    <property type="entry name" value="Trp_synthase_alpha_AS"/>
</dbReference>
<dbReference type="InterPro" id="IPR002028">
    <property type="entry name" value="Trp_synthase_suA"/>
</dbReference>
<dbReference type="NCBIfam" id="TIGR00262">
    <property type="entry name" value="trpA"/>
    <property type="match status" value="1"/>
</dbReference>
<dbReference type="PANTHER" id="PTHR43406:SF1">
    <property type="entry name" value="TRYPTOPHAN SYNTHASE ALPHA CHAIN, CHLOROPLASTIC"/>
    <property type="match status" value="1"/>
</dbReference>
<dbReference type="PANTHER" id="PTHR43406">
    <property type="entry name" value="TRYPTOPHAN SYNTHASE, ALPHA CHAIN"/>
    <property type="match status" value="1"/>
</dbReference>
<dbReference type="Pfam" id="PF00290">
    <property type="entry name" value="Trp_syntA"/>
    <property type="match status" value="1"/>
</dbReference>
<dbReference type="SUPFAM" id="SSF51366">
    <property type="entry name" value="Ribulose-phoshate binding barrel"/>
    <property type="match status" value="1"/>
</dbReference>
<dbReference type="PROSITE" id="PS00167">
    <property type="entry name" value="TRP_SYNTHASE_ALPHA"/>
    <property type="match status" value="1"/>
</dbReference>
<protein>
    <recommendedName>
        <fullName evidence="1">Tryptophan synthase alpha chain</fullName>
        <ecNumber evidence="1">4.2.1.20</ecNumber>
    </recommendedName>
</protein>
<organism>
    <name type="scientific">Escherichia coli (strain K12 / MC4100 / BW2952)</name>
    <dbReference type="NCBI Taxonomy" id="595496"/>
    <lineage>
        <taxon>Bacteria</taxon>
        <taxon>Pseudomonadati</taxon>
        <taxon>Pseudomonadota</taxon>
        <taxon>Gammaproteobacteria</taxon>
        <taxon>Enterobacterales</taxon>
        <taxon>Enterobacteriaceae</taxon>
        <taxon>Escherichia</taxon>
    </lineage>
</organism>
<accession>C4ZTV3</accession>
<evidence type="ECO:0000255" key="1">
    <source>
        <dbReference type="HAMAP-Rule" id="MF_00131"/>
    </source>
</evidence>
<reference key="1">
    <citation type="journal article" date="2009" name="J. Bacteriol.">
        <title>Genomic sequencing reveals regulatory mutations and recombinational events in the widely used MC4100 lineage of Escherichia coli K-12.</title>
        <authorList>
            <person name="Ferenci T."/>
            <person name="Zhou Z."/>
            <person name="Betteridge T."/>
            <person name="Ren Y."/>
            <person name="Liu Y."/>
            <person name="Feng L."/>
            <person name="Reeves P.R."/>
            <person name="Wang L."/>
        </authorList>
    </citation>
    <scope>NUCLEOTIDE SEQUENCE [LARGE SCALE GENOMIC DNA]</scope>
    <source>
        <strain>K12 / MC4100 / BW2952</strain>
    </source>
</reference>
<comment type="function">
    <text evidence="1">The alpha subunit is responsible for the aldol cleavage of indoleglycerol phosphate to indole and glyceraldehyde 3-phosphate.</text>
</comment>
<comment type="catalytic activity">
    <reaction evidence="1">
        <text>(1S,2R)-1-C-(indol-3-yl)glycerol 3-phosphate + L-serine = D-glyceraldehyde 3-phosphate + L-tryptophan + H2O</text>
        <dbReference type="Rhea" id="RHEA:10532"/>
        <dbReference type="ChEBI" id="CHEBI:15377"/>
        <dbReference type="ChEBI" id="CHEBI:33384"/>
        <dbReference type="ChEBI" id="CHEBI:57912"/>
        <dbReference type="ChEBI" id="CHEBI:58866"/>
        <dbReference type="ChEBI" id="CHEBI:59776"/>
        <dbReference type="EC" id="4.2.1.20"/>
    </reaction>
</comment>
<comment type="pathway">
    <text evidence="1">Amino-acid biosynthesis; L-tryptophan biosynthesis; L-tryptophan from chorismate: step 5/5.</text>
</comment>
<comment type="subunit">
    <text evidence="1">Tetramer of two alpha and two beta chains.</text>
</comment>
<comment type="similarity">
    <text evidence="1">Belongs to the TrpA family.</text>
</comment>
<keyword id="KW-0028">Amino-acid biosynthesis</keyword>
<keyword id="KW-0057">Aromatic amino acid biosynthesis</keyword>
<keyword id="KW-0456">Lyase</keyword>
<keyword id="KW-0822">Tryptophan biosynthesis</keyword>
<feature type="chain" id="PRO_1000203180" description="Tryptophan synthase alpha chain">
    <location>
        <begin position="1"/>
        <end position="268"/>
    </location>
</feature>
<feature type="active site" description="Proton acceptor" evidence="1">
    <location>
        <position position="49"/>
    </location>
</feature>
<feature type="active site" description="Proton acceptor" evidence="1">
    <location>
        <position position="60"/>
    </location>
</feature>
<sequence>MERYESLFAQLKERKEGAFVPFVTLGDPGIEQSLKIIDTLIEAGADALELGIPFSDPLADGPTIQNATLRAFAAGVTPAQCFEMLALIRQKHPTIPIGLLMYANLVFNKGIDEFYAQCEKVGVDSVLVADVPVEESAPFRQAALRHNVAPIFICPPNADDDLLRQIASYGRGYTYLLSRAGVTGAENRAALPLNHLVAKLKEYNAAPPLQGFGISAPDQVKAAIDAGAAGAISGSAIVKIIEQHINEPEKMLAALKVFVQPMKAATRS</sequence>